<accession>Q5SI26</accession>
<reference key="1">
    <citation type="submission" date="2004-11" db="EMBL/GenBank/DDBJ databases">
        <title>Complete genome sequence of Thermus thermophilus HB8.</title>
        <authorList>
            <person name="Masui R."/>
            <person name="Kurokawa K."/>
            <person name="Nakagawa N."/>
            <person name="Tokunaga F."/>
            <person name="Koyama Y."/>
            <person name="Shibata T."/>
            <person name="Oshima T."/>
            <person name="Yokoyama S."/>
            <person name="Yasunaga T."/>
            <person name="Kuramitsu S."/>
        </authorList>
    </citation>
    <scope>NUCLEOTIDE SEQUENCE [LARGE SCALE GENOMIC DNA]</scope>
    <source>
        <strain>ATCC 27634 / DSM 579 / HB8</strain>
    </source>
</reference>
<reference key="2">
    <citation type="journal article" date="2005" name="Biochim. Biophys. Acta">
        <title>Conserved protein TTHA1554 from Thermus thermophilus HB8 binds to glutamine synthetase and cystathionine beta-lyase.</title>
        <authorList>
            <person name="Arai R."/>
            <person name="Nishimoto M."/>
            <person name="Toyama M."/>
            <person name="Terada T."/>
            <person name="Kuramitsu S."/>
            <person name="Shirouzu M."/>
            <person name="Yokoyama S."/>
        </authorList>
    </citation>
    <scope>FUNCTION</scope>
    <scope>INTERACTION WITH GLUTAMINE SYNTHETASE AND CYSTATHIONINE BETA-LYASE</scope>
    <source>
        <strain>ATCC 27634 / DSM 579 / HB8</strain>
    </source>
</reference>
<dbReference type="EMBL" id="AP008226">
    <property type="protein sequence ID" value="BAD71377.1"/>
    <property type="molecule type" value="Genomic_DNA"/>
</dbReference>
<dbReference type="RefSeq" id="WP_011228759.1">
    <property type="nucleotide sequence ID" value="NC_006461.1"/>
</dbReference>
<dbReference type="RefSeq" id="YP_144820.1">
    <property type="nucleotide sequence ID" value="NC_006461.1"/>
</dbReference>
<dbReference type="SMR" id="Q5SI26"/>
<dbReference type="EnsemblBacteria" id="BAD71377">
    <property type="protein sequence ID" value="BAD71377"/>
    <property type="gene ID" value="BAD71377"/>
</dbReference>
<dbReference type="GeneID" id="3169206"/>
<dbReference type="KEGG" id="ttj:TTHA1554"/>
<dbReference type="PATRIC" id="fig|300852.9.peg.1525"/>
<dbReference type="eggNOG" id="COG4274">
    <property type="taxonomic scope" value="Bacteria"/>
</dbReference>
<dbReference type="HOGENOM" id="CLU_155227_2_1_0"/>
<dbReference type="PhylomeDB" id="Q5SI26"/>
<dbReference type="Proteomes" id="UP000000532">
    <property type="component" value="Chromosome"/>
</dbReference>
<dbReference type="InterPro" id="IPR014845">
    <property type="entry name" value="GYD/TTHA1554"/>
</dbReference>
<dbReference type="Pfam" id="PF08734">
    <property type="entry name" value="GYD"/>
    <property type="match status" value="1"/>
</dbReference>
<comment type="function">
    <text evidence="1">Binds to glutamine synthetase and cystathionine beta-lyase. May be utilized for the efficient use of nitrogen in the global nitrogen regulation of T.thermophilus.</text>
</comment>
<comment type="subunit">
    <text evidence="1">Interacts with glutamine synthetase (TTHA1329) and cystathionine beta-lyase (TTHA1620), but proteins do not form a ternary complex.</text>
</comment>
<name>GCBP_THET8</name>
<feature type="chain" id="PRO_0000442988" description="Glutamine synthetase and cystathionine beta-lyase binding protein">
    <location>
        <begin position="1"/>
        <end position="95"/>
    </location>
</feature>
<keyword id="KW-1185">Reference proteome</keyword>
<evidence type="ECO:0000269" key="1">
    <source>
    </source>
</evidence>
<evidence type="ECO:0000303" key="2">
    <source>
    </source>
</evidence>
<evidence type="ECO:0000312" key="3">
    <source>
        <dbReference type="EMBL" id="BAD71377.1"/>
    </source>
</evidence>
<organism>
    <name type="scientific">Thermus thermophilus (strain ATCC 27634 / DSM 579 / HB8)</name>
    <dbReference type="NCBI Taxonomy" id="300852"/>
    <lineage>
        <taxon>Bacteria</taxon>
        <taxon>Thermotogati</taxon>
        <taxon>Deinococcota</taxon>
        <taxon>Deinococci</taxon>
        <taxon>Thermales</taxon>
        <taxon>Thermaceae</taxon>
        <taxon>Thermus</taxon>
    </lineage>
</organism>
<protein>
    <recommendedName>
        <fullName evidence="2">Glutamine synthetase and cystathionine beta-lyase binding protein</fullName>
        <shortName evidence="2">GCBP</shortName>
    </recommendedName>
</protein>
<proteinExistence type="evidence at protein level"/>
<gene>
    <name evidence="3" type="ordered locus">TTHA1554</name>
</gene>
<sequence>MPTFIVLSTLTDDGAETLVKNPERIKEVNQELERDFGVRVVAQYAVLGPYDFVNVVEAEDAATVARAMLHLASRGSVKTMTLEAIPVADLIARLK</sequence>